<evidence type="ECO:0000255" key="1">
    <source>
        <dbReference type="HAMAP-Rule" id="MF_01808"/>
    </source>
</evidence>
<evidence type="ECO:0000255" key="2">
    <source>
        <dbReference type="PROSITE-ProRule" id="PRU01246"/>
    </source>
</evidence>
<evidence type="ECO:0000255" key="3">
    <source>
        <dbReference type="PROSITE-ProRule" id="PRU01248"/>
    </source>
</evidence>
<feature type="chain" id="PRO_0000095335" description="Tyrosine recombinase XerC">
    <location>
        <begin position="1"/>
        <end position="298"/>
    </location>
</feature>
<feature type="domain" description="Core-binding (CB)" evidence="3">
    <location>
        <begin position="1"/>
        <end position="84"/>
    </location>
</feature>
<feature type="domain" description="Tyr recombinase" evidence="2">
    <location>
        <begin position="105"/>
        <end position="286"/>
    </location>
</feature>
<feature type="active site" evidence="1">
    <location>
        <position position="145"/>
    </location>
</feature>
<feature type="active site" evidence="1">
    <location>
        <position position="169"/>
    </location>
</feature>
<feature type="active site" evidence="1">
    <location>
        <position position="238"/>
    </location>
</feature>
<feature type="active site" evidence="1">
    <location>
        <position position="241"/>
    </location>
</feature>
<feature type="active site" evidence="1">
    <location>
        <position position="264"/>
    </location>
</feature>
<feature type="active site" description="O-(3'-phospho-DNA)-tyrosine intermediate" evidence="1">
    <location>
        <position position="273"/>
    </location>
</feature>
<comment type="function">
    <text evidence="1">Site-specific tyrosine recombinase, which acts by catalyzing the cutting and rejoining of the recombining DNA molecules. The XerC-XerD complex is essential to convert dimers of the bacterial chromosome into monomers to permit their segregation at cell division. It also contributes to the segregational stability of plasmids.</text>
</comment>
<comment type="subunit">
    <text evidence="1">Forms a cyclic heterotetrameric complex composed of two molecules of XerC and two molecules of XerD.</text>
</comment>
<comment type="subcellular location">
    <subcellularLocation>
        <location evidence="1">Cytoplasm</location>
    </subcellularLocation>
</comment>
<comment type="similarity">
    <text evidence="1">Belongs to the 'phage' integrase family. XerC subfamily.</text>
</comment>
<organism>
    <name type="scientific">Staphylococcus aureus (strain MW2)</name>
    <dbReference type="NCBI Taxonomy" id="196620"/>
    <lineage>
        <taxon>Bacteria</taxon>
        <taxon>Bacillati</taxon>
        <taxon>Bacillota</taxon>
        <taxon>Bacilli</taxon>
        <taxon>Bacillales</taxon>
        <taxon>Staphylococcaceae</taxon>
        <taxon>Staphylococcus</taxon>
    </lineage>
</organism>
<reference key="1">
    <citation type="journal article" date="2002" name="Lancet">
        <title>Genome and virulence determinants of high virulence community-acquired MRSA.</title>
        <authorList>
            <person name="Baba T."/>
            <person name="Takeuchi F."/>
            <person name="Kuroda M."/>
            <person name="Yuzawa H."/>
            <person name="Aoki K."/>
            <person name="Oguchi A."/>
            <person name="Nagai Y."/>
            <person name="Iwama N."/>
            <person name="Asano K."/>
            <person name="Naimi T."/>
            <person name="Kuroda H."/>
            <person name="Cui L."/>
            <person name="Yamamoto K."/>
            <person name="Hiramatsu K."/>
        </authorList>
    </citation>
    <scope>NUCLEOTIDE SEQUENCE [LARGE SCALE GENOMIC DNA]</scope>
    <source>
        <strain>MW2</strain>
    </source>
</reference>
<gene>
    <name evidence="1" type="primary">xerC</name>
    <name type="ordered locus">MW1135</name>
</gene>
<accession>Q8NWZ8</accession>
<protein>
    <recommendedName>
        <fullName evidence="1">Tyrosine recombinase XerC</fullName>
    </recommendedName>
</protein>
<keyword id="KW-0131">Cell cycle</keyword>
<keyword id="KW-0132">Cell division</keyword>
<keyword id="KW-0159">Chromosome partition</keyword>
<keyword id="KW-0963">Cytoplasm</keyword>
<keyword id="KW-0229">DNA integration</keyword>
<keyword id="KW-0233">DNA recombination</keyword>
<keyword id="KW-0238">DNA-binding</keyword>
<name>XERC_STAAW</name>
<sequence>MNHIQEAFLNTLKVERNFSEHTLKSYQDDLIQFNQFLEQEHLQLKTFEYRDARNYLSYLYSNHLKRTSVSRKISTLRTFYEYWMTLDENIINPFVQLVHPKKEKYLPQFFYEEEMEALFKTVEEDTSKSLRDRVILELLYATGIRVSELVNIKKQDIDFYANGVTVLGKGSKERFVPFGAYCRQSIENYLEHFKPIQSCNHDFLIVNMKGEAITERGVRYVLNDIVKRTAGVSEIHPHKLRHTFATHLLNQGADLRTVQSLLGHVNLSTTGKYTHVSNQQLRKVYLNAHPRAKKENET</sequence>
<dbReference type="EMBL" id="BA000033">
    <property type="protein sequence ID" value="BAB95000.1"/>
    <property type="molecule type" value="Genomic_DNA"/>
</dbReference>
<dbReference type="RefSeq" id="WP_001015602.1">
    <property type="nucleotide sequence ID" value="NC_003923.1"/>
</dbReference>
<dbReference type="SMR" id="Q8NWZ8"/>
<dbReference type="KEGG" id="sam:MW1135"/>
<dbReference type="HOGENOM" id="CLU_027562_9_0_9"/>
<dbReference type="GO" id="GO:0005737">
    <property type="term" value="C:cytoplasm"/>
    <property type="evidence" value="ECO:0007669"/>
    <property type="project" value="UniProtKB-SubCell"/>
</dbReference>
<dbReference type="GO" id="GO:0003677">
    <property type="term" value="F:DNA binding"/>
    <property type="evidence" value="ECO:0007669"/>
    <property type="project" value="UniProtKB-KW"/>
</dbReference>
<dbReference type="GO" id="GO:0009037">
    <property type="term" value="F:tyrosine-based site-specific recombinase activity"/>
    <property type="evidence" value="ECO:0007669"/>
    <property type="project" value="UniProtKB-UniRule"/>
</dbReference>
<dbReference type="GO" id="GO:0051301">
    <property type="term" value="P:cell division"/>
    <property type="evidence" value="ECO:0007669"/>
    <property type="project" value="UniProtKB-KW"/>
</dbReference>
<dbReference type="GO" id="GO:0007059">
    <property type="term" value="P:chromosome segregation"/>
    <property type="evidence" value="ECO:0007669"/>
    <property type="project" value="UniProtKB-UniRule"/>
</dbReference>
<dbReference type="GO" id="GO:0006313">
    <property type="term" value="P:DNA transposition"/>
    <property type="evidence" value="ECO:0007669"/>
    <property type="project" value="UniProtKB-UniRule"/>
</dbReference>
<dbReference type="CDD" id="cd00798">
    <property type="entry name" value="INT_XerDC_C"/>
    <property type="match status" value="1"/>
</dbReference>
<dbReference type="Gene3D" id="1.10.150.130">
    <property type="match status" value="1"/>
</dbReference>
<dbReference type="Gene3D" id="1.10.443.10">
    <property type="entry name" value="Intergrase catalytic core"/>
    <property type="match status" value="1"/>
</dbReference>
<dbReference type="HAMAP" id="MF_01808">
    <property type="entry name" value="Recomb_XerC_XerD"/>
    <property type="match status" value="1"/>
</dbReference>
<dbReference type="InterPro" id="IPR044068">
    <property type="entry name" value="CB"/>
</dbReference>
<dbReference type="InterPro" id="IPR011010">
    <property type="entry name" value="DNA_brk_join_enz"/>
</dbReference>
<dbReference type="InterPro" id="IPR013762">
    <property type="entry name" value="Integrase-like_cat_sf"/>
</dbReference>
<dbReference type="InterPro" id="IPR002104">
    <property type="entry name" value="Integrase_catalytic"/>
</dbReference>
<dbReference type="InterPro" id="IPR010998">
    <property type="entry name" value="Integrase_recombinase_N"/>
</dbReference>
<dbReference type="InterPro" id="IPR004107">
    <property type="entry name" value="Integrase_SAM-like_N"/>
</dbReference>
<dbReference type="InterPro" id="IPR011931">
    <property type="entry name" value="Recomb_XerC"/>
</dbReference>
<dbReference type="InterPro" id="IPR023009">
    <property type="entry name" value="Tyrosine_recombinase_XerC/XerD"/>
</dbReference>
<dbReference type="InterPro" id="IPR050090">
    <property type="entry name" value="Tyrosine_recombinase_XerCD"/>
</dbReference>
<dbReference type="NCBIfam" id="NF001399">
    <property type="entry name" value="PRK00283.1"/>
    <property type="match status" value="1"/>
</dbReference>
<dbReference type="NCBIfam" id="NF040815">
    <property type="entry name" value="recomb_XerA_Arch"/>
    <property type="match status" value="1"/>
</dbReference>
<dbReference type="NCBIfam" id="TIGR02224">
    <property type="entry name" value="recomb_XerC"/>
    <property type="match status" value="1"/>
</dbReference>
<dbReference type="PANTHER" id="PTHR30349">
    <property type="entry name" value="PHAGE INTEGRASE-RELATED"/>
    <property type="match status" value="1"/>
</dbReference>
<dbReference type="PANTHER" id="PTHR30349:SF77">
    <property type="entry name" value="TYROSINE RECOMBINASE XERC"/>
    <property type="match status" value="1"/>
</dbReference>
<dbReference type="Pfam" id="PF02899">
    <property type="entry name" value="Phage_int_SAM_1"/>
    <property type="match status" value="1"/>
</dbReference>
<dbReference type="Pfam" id="PF00589">
    <property type="entry name" value="Phage_integrase"/>
    <property type="match status" value="1"/>
</dbReference>
<dbReference type="SUPFAM" id="SSF56349">
    <property type="entry name" value="DNA breaking-rejoining enzymes"/>
    <property type="match status" value="1"/>
</dbReference>
<dbReference type="PROSITE" id="PS51900">
    <property type="entry name" value="CB"/>
    <property type="match status" value="1"/>
</dbReference>
<dbReference type="PROSITE" id="PS51898">
    <property type="entry name" value="TYR_RECOMBINASE"/>
    <property type="match status" value="1"/>
</dbReference>
<proteinExistence type="inferred from homology"/>